<feature type="transit peptide" description="Chloroplast" evidence="5">
    <location>
        <begin position="1"/>
        <end position="65"/>
    </location>
</feature>
<feature type="chain" id="PRO_0000249863" description="Large ribosomal subunit protein cL37">
    <location>
        <begin position="66"/>
        <end position="148"/>
    </location>
</feature>
<feature type="region of interest" description="Disordered" evidence="2">
    <location>
        <begin position="125"/>
        <end position="148"/>
    </location>
</feature>
<feature type="modified residue" description="N-acetylalanine" evidence="5">
    <location>
        <position position="66"/>
    </location>
</feature>
<feature type="sequence conflict" description="In Ref. 3; AAK68822." evidence="4" ref="3">
    <original>P</original>
    <variation>Q</variation>
    <location>
        <position position="89"/>
    </location>
</feature>
<accession>Q9LER7</accession>
<accession>Q94B31</accession>
<dbReference type="EMBL" id="AL390921">
    <property type="protein sequence ID" value="CAC00754.1"/>
    <property type="molecule type" value="Genomic_DNA"/>
</dbReference>
<dbReference type="EMBL" id="CP002686">
    <property type="protein sequence ID" value="AEE79585.1"/>
    <property type="molecule type" value="Genomic_DNA"/>
</dbReference>
<dbReference type="EMBL" id="AY042882">
    <property type="protein sequence ID" value="AAK68822.1"/>
    <property type="molecule type" value="mRNA"/>
</dbReference>
<dbReference type="EMBL" id="BT014859">
    <property type="protein sequence ID" value="AAT41842.1"/>
    <property type="molecule type" value="mRNA"/>
</dbReference>
<dbReference type="PIR" id="T51279">
    <property type="entry name" value="T51279"/>
</dbReference>
<dbReference type="RefSeq" id="NP_191250.1">
    <property type="nucleotide sequence ID" value="NM_115550.4"/>
</dbReference>
<dbReference type="SMR" id="Q9LER7"/>
<dbReference type="BioGRID" id="10174">
    <property type="interactions" value="3"/>
</dbReference>
<dbReference type="FunCoup" id="Q9LER7">
    <property type="interactions" value="1493"/>
</dbReference>
<dbReference type="IntAct" id="Q9LER7">
    <property type="interactions" value="1"/>
</dbReference>
<dbReference type="STRING" id="3702.Q9LER7"/>
<dbReference type="iPTMnet" id="Q9LER7"/>
<dbReference type="PaxDb" id="3702-AT3G56910.1"/>
<dbReference type="ProteomicsDB" id="249371"/>
<dbReference type="EnsemblPlants" id="AT3G56910.1">
    <property type="protein sequence ID" value="AT3G56910.1"/>
    <property type="gene ID" value="AT3G56910"/>
</dbReference>
<dbReference type="GeneID" id="824858"/>
<dbReference type="Gramene" id="AT3G56910.1">
    <property type="protein sequence ID" value="AT3G56910.1"/>
    <property type="gene ID" value="AT3G56910"/>
</dbReference>
<dbReference type="KEGG" id="ath:AT3G56910"/>
<dbReference type="Araport" id="AT3G56910"/>
<dbReference type="TAIR" id="AT3G56910">
    <property type="gene designation" value="PSRP5"/>
</dbReference>
<dbReference type="eggNOG" id="ENOG502S4BT">
    <property type="taxonomic scope" value="Eukaryota"/>
</dbReference>
<dbReference type="HOGENOM" id="CLU_124099_0_1_1"/>
<dbReference type="InParanoid" id="Q9LER7"/>
<dbReference type="OMA" id="QMTEQKM"/>
<dbReference type="PRO" id="PR:Q9LER7"/>
<dbReference type="Proteomes" id="UP000006548">
    <property type="component" value="Chromosome 3"/>
</dbReference>
<dbReference type="ExpressionAtlas" id="Q9LER7">
    <property type="expression patterns" value="baseline and differential"/>
</dbReference>
<dbReference type="GO" id="GO:0009507">
    <property type="term" value="C:chloroplast"/>
    <property type="evidence" value="ECO:0000314"/>
    <property type="project" value="TAIR"/>
</dbReference>
<dbReference type="GO" id="GO:0009941">
    <property type="term" value="C:chloroplast envelope"/>
    <property type="evidence" value="ECO:0007005"/>
    <property type="project" value="TAIR"/>
</dbReference>
<dbReference type="GO" id="GO:0009535">
    <property type="term" value="C:chloroplast thylakoid membrane"/>
    <property type="evidence" value="ECO:0007005"/>
    <property type="project" value="TAIR"/>
</dbReference>
<dbReference type="GO" id="GO:0005829">
    <property type="term" value="C:cytosol"/>
    <property type="evidence" value="ECO:0007005"/>
    <property type="project" value="TAIR"/>
</dbReference>
<dbReference type="GO" id="GO:1990904">
    <property type="term" value="C:ribonucleoprotein complex"/>
    <property type="evidence" value="ECO:0007669"/>
    <property type="project" value="UniProtKB-KW"/>
</dbReference>
<dbReference type="GO" id="GO:0005840">
    <property type="term" value="C:ribosome"/>
    <property type="evidence" value="ECO:0007669"/>
    <property type="project" value="UniProtKB-KW"/>
</dbReference>
<dbReference type="GO" id="GO:0009579">
    <property type="term" value="C:thylakoid"/>
    <property type="evidence" value="ECO:0007005"/>
    <property type="project" value="TAIR"/>
</dbReference>
<dbReference type="GO" id="GO:0032544">
    <property type="term" value="P:plastid translation"/>
    <property type="evidence" value="ECO:0000315"/>
    <property type="project" value="TAIR"/>
</dbReference>
<dbReference type="GO" id="GO:0110102">
    <property type="term" value="P:ribulose bisphosphate carboxylase complex assembly"/>
    <property type="evidence" value="ECO:0000315"/>
    <property type="project" value="TAIR"/>
</dbReference>
<dbReference type="InterPro" id="IPR040307">
    <property type="entry name" value="Ribosomal_cL37"/>
</dbReference>
<dbReference type="PANTHER" id="PTHR34678">
    <property type="entry name" value="50S RIBOSOMAL PROTEIN 5, CHLOROPLASTIC"/>
    <property type="match status" value="1"/>
</dbReference>
<dbReference type="PANTHER" id="PTHR34678:SF1">
    <property type="entry name" value="LARGE RIBOSOMAL SUBUNIT PROTEIN CL37"/>
    <property type="match status" value="1"/>
</dbReference>
<protein>
    <recommendedName>
        <fullName evidence="3">Large ribosomal subunit protein cL37</fullName>
    </recommendedName>
    <alternativeName>
        <fullName>50S ribosomal protein 5, chloroplastic</fullName>
    </alternativeName>
    <alternativeName>
        <fullName>Plastid-specific 50S ribosomal protein 5</fullName>
        <shortName>PSRP-5</shortName>
    </alternativeName>
</protein>
<name>PSRP5_ARATH</name>
<reference key="1">
    <citation type="journal article" date="2000" name="Nature">
        <title>Sequence and analysis of chromosome 3 of the plant Arabidopsis thaliana.</title>
        <authorList>
            <person name="Salanoubat M."/>
            <person name="Lemcke K."/>
            <person name="Rieger M."/>
            <person name="Ansorge W."/>
            <person name="Unseld M."/>
            <person name="Fartmann B."/>
            <person name="Valle G."/>
            <person name="Bloecker H."/>
            <person name="Perez-Alonso M."/>
            <person name="Obermaier B."/>
            <person name="Delseny M."/>
            <person name="Boutry M."/>
            <person name="Grivell L.A."/>
            <person name="Mache R."/>
            <person name="Puigdomenech P."/>
            <person name="De Simone V."/>
            <person name="Choisne N."/>
            <person name="Artiguenave F."/>
            <person name="Robert C."/>
            <person name="Brottier P."/>
            <person name="Wincker P."/>
            <person name="Cattolico L."/>
            <person name="Weissenbach J."/>
            <person name="Saurin W."/>
            <person name="Quetier F."/>
            <person name="Schaefer M."/>
            <person name="Mueller-Auer S."/>
            <person name="Gabel C."/>
            <person name="Fuchs M."/>
            <person name="Benes V."/>
            <person name="Wurmbach E."/>
            <person name="Drzonek H."/>
            <person name="Erfle H."/>
            <person name="Jordan N."/>
            <person name="Bangert S."/>
            <person name="Wiedelmann R."/>
            <person name="Kranz H."/>
            <person name="Voss H."/>
            <person name="Holland R."/>
            <person name="Brandt P."/>
            <person name="Nyakatura G."/>
            <person name="Vezzi A."/>
            <person name="D'Angelo M."/>
            <person name="Pallavicini A."/>
            <person name="Toppo S."/>
            <person name="Simionati B."/>
            <person name="Conrad A."/>
            <person name="Hornischer K."/>
            <person name="Kauer G."/>
            <person name="Loehnert T.-H."/>
            <person name="Nordsiek G."/>
            <person name="Reichelt J."/>
            <person name="Scharfe M."/>
            <person name="Schoen O."/>
            <person name="Bargues M."/>
            <person name="Terol J."/>
            <person name="Climent J."/>
            <person name="Navarro P."/>
            <person name="Collado C."/>
            <person name="Perez-Perez A."/>
            <person name="Ottenwaelder B."/>
            <person name="Duchemin D."/>
            <person name="Cooke R."/>
            <person name="Laudie M."/>
            <person name="Berger-Llauro C."/>
            <person name="Purnelle B."/>
            <person name="Masuy D."/>
            <person name="de Haan M."/>
            <person name="Maarse A.C."/>
            <person name="Alcaraz J.-P."/>
            <person name="Cottet A."/>
            <person name="Casacuberta E."/>
            <person name="Monfort A."/>
            <person name="Argiriou A."/>
            <person name="Flores M."/>
            <person name="Liguori R."/>
            <person name="Vitale D."/>
            <person name="Mannhaupt G."/>
            <person name="Haase D."/>
            <person name="Schoof H."/>
            <person name="Rudd S."/>
            <person name="Zaccaria P."/>
            <person name="Mewes H.-W."/>
            <person name="Mayer K.F.X."/>
            <person name="Kaul S."/>
            <person name="Town C.D."/>
            <person name="Koo H.L."/>
            <person name="Tallon L.J."/>
            <person name="Jenkins J."/>
            <person name="Rooney T."/>
            <person name="Rizzo M."/>
            <person name="Walts A."/>
            <person name="Utterback T."/>
            <person name="Fujii C.Y."/>
            <person name="Shea T.P."/>
            <person name="Creasy T.H."/>
            <person name="Haas B."/>
            <person name="Maiti R."/>
            <person name="Wu D."/>
            <person name="Peterson J."/>
            <person name="Van Aken S."/>
            <person name="Pai G."/>
            <person name="Militscher J."/>
            <person name="Sellers P."/>
            <person name="Gill J.E."/>
            <person name="Feldblyum T.V."/>
            <person name="Preuss D."/>
            <person name="Lin X."/>
            <person name="Nierman W.C."/>
            <person name="Salzberg S.L."/>
            <person name="White O."/>
            <person name="Venter J.C."/>
            <person name="Fraser C.M."/>
            <person name="Kaneko T."/>
            <person name="Nakamura Y."/>
            <person name="Sato S."/>
            <person name="Kato T."/>
            <person name="Asamizu E."/>
            <person name="Sasamoto S."/>
            <person name="Kimura T."/>
            <person name="Idesawa K."/>
            <person name="Kawashima K."/>
            <person name="Kishida Y."/>
            <person name="Kiyokawa C."/>
            <person name="Kohara M."/>
            <person name="Matsumoto M."/>
            <person name="Matsuno A."/>
            <person name="Muraki A."/>
            <person name="Nakayama S."/>
            <person name="Nakazaki N."/>
            <person name="Shinpo S."/>
            <person name="Takeuchi C."/>
            <person name="Wada T."/>
            <person name="Watanabe A."/>
            <person name="Yamada M."/>
            <person name="Yasuda M."/>
            <person name="Tabata S."/>
        </authorList>
    </citation>
    <scope>NUCLEOTIDE SEQUENCE [LARGE SCALE GENOMIC DNA]</scope>
    <source>
        <strain>cv. Columbia</strain>
    </source>
</reference>
<reference key="2">
    <citation type="journal article" date="2017" name="Plant J.">
        <title>Araport11: a complete reannotation of the Arabidopsis thaliana reference genome.</title>
        <authorList>
            <person name="Cheng C.Y."/>
            <person name="Krishnakumar V."/>
            <person name="Chan A.P."/>
            <person name="Thibaud-Nissen F."/>
            <person name="Schobel S."/>
            <person name="Town C.D."/>
        </authorList>
    </citation>
    <scope>GENOME REANNOTATION</scope>
    <source>
        <strain>cv. Columbia</strain>
    </source>
</reference>
<reference key="3">
    <citation type="journal article" date="2003" name="Science">
        <title>Empirical analysis of transcriptional activity in the Arabidopsis genome.</title>
        <authorList>
            <person name="Yamada K."/>
            <person name="Lim J."/>
            <person name="Dale J.M."/>
            <person name="Chen H."/>
            <person name="Shinn P."/>
            <person name="Palm C.J."/>
            <person name="Southwick A.M."/>
            <person name="Wu H.C."/>
            <person name="Kim C.J."/>
            <person name="Nguyen M."/>
            <person name="Pham P.K."/>
            <person name="Cheuk R.F."/>
            <person name="Karlin-Newmann G."/>
            <person name="Liu S.X."/>
            <person name="Lam B."/>
            <person name="Sakano H."/>
            <person name="Wu T."/>
            <person name="Yu G."/>
            <person name="Miranda M."/>
            <person name="Quach H.L."/>
            <person name="Tripp M."/>
            <person name="Chang C.H."/>
            <person name="Lee J.M."/>
            <person name="Toriumi M.J."/>
            <person name="Chan M.M."/>
            <person name="Tang C.C."/>
            <person name="Onodera C.S."/>
            <person name="Deng J.M."/>
            <person name="Akiyama K."/>
            <person name="Ansari Y."/>
            <person name="Arakawa T."/>
            <person name="Banh J."/>
            <person name="Banno F."/>
            <person name="Bowser L."/>
            <person name="Brooks S.Y."/>
            <person name="Carninci P."/>
            <person name="Chao Q."/>
            <person name="Choy N."/>
            <person name="Enju A."/>
            <person name="Goldsmith A.D."/>
            <person name="Gurjal M."/>
            <person name="Hansen N.F."/>
            <person name="Hayashizaki Y."/>
            <person name="Johnson-Hopson C."/>
            <person name="Hsuan V.W."/>
            <person name="Iida K."/>
            <person name="Karnes M."/>
            <person name="Khan S."/>
            <person name="Koesema E."/>
            <person name="Ishida J."/>
            <person name="Jiang P.X."/>
            <person name="Jones T."/>
            <person name="Kawai J."/>
            <person name="Kamiya A."/>
            <person name="Meyers C."/>
            <person name="Nakajima M."/>
            <person name="Narusaka M."/>
            <person name="Seki M."/>
            <person name="Sakurai T."/>
            <person name="Satou M."/>
            <person name="Tamse R."/>
            <person name="Vaysberg M."/>
            <person name="Wallender E.K."/>
            <person name="Wong C."/>
            <person name="Yamamura Y."/>
            <person name="Yuan S."/>
            <person name="Shinozaki K."/>
            <person name="Davis R.W."/>
            <person name="Theologis A."/>
            <person name="Ecker J.R."/>
        </authorList>
    </citation>
    <scope>NUCLEOTIDE SEQUENCE [LARGE SCALE MRNA]</scope>
    <source>
        <strain>cv. Columbia</strain>
    </source>
</reference>
<reference key="4">
    <citation type="submission" date="2004-06" db="EMBL/GenBank/DDBJ databases">
        <title>Arabidopsis ORF clones.</title>
        <authorList>
            <person name="Cheuk R.F."/>
            <person name="Chen H."/>
            <person name="Kim C.J."/>
            <person name="Shinn P."/>
            <person name="Ecker J.R."/>
        </authorList>
    </citation>
    <scope>NUCLEOTIDE SEQUENCE [LARGE SCALE MRNA]</scope>
    <source>
        <strain>cv. Columbia</strain>
    </source>
</reference>
<reference key="5">
    <citation type="journal article" date="2012" name="Mol. Cell. Proteomics">
        <title>Comparative large-scale characterisation of plant vs. mammal proteins reveals similar and idiosyncratic N-alpha acetylation features.</title>
        <authorList>
            <person name="Bienvenut W.V."/>
            <person name="Sumpton D."/>
            <person name="Martinez A."/>
            <person name="Lilla S."/>
            <person name="Espagne C."/>
            <person name="Meinnel T."/>
            <person name="Giglione C."/>
        </authorList>
    </citation>
    <scope>ACETYLATION [LARGE SCALE ANALYSIS] AT ALA-66</scope>
    <scope>CLEAVAGE OF TRANSIT PEPTIDE [LARGE SCALE ANALYSIS] AFTER ALA-65</scope>
    <scope>IDENTIFICATION BY MASS SPECTROMETRY [LARGE SCALE ANALYSIS]</scope>
</reference>
<reference key="6">
    <citation type="journal article" date="2023" name="Plant Cell">
        <title>An updated nomenclature for plant ribosomal protein genes.</title>
        <authorList>
            <person name="Scarpin M.R."/>
            <person name="Busche M."/>
            <person name="Martinez R.E."/>
            <person name="Harper L.C."/>
            <person name="Reiser L."/>
            <person name="Szakonyi D."/>
            <person name="Merchante C."/>
            <person name="Lan T."/>
            <person name="Xiong W."/>
            <person name="Mo B."/>
            <person name="Tang G."/>
            <person name="Chen X."/>
            <person name="Bailey-Serres J."/>
            <person name="Browning K.S."/>
            <person name="Brunkard J.O."/>
        </authorList>
    </citation>
    <scope>NOMENCLATURE</scope>
</reference>
<comment type="subunit">
    <text evidence="1">Part of the 50S ribosomal subunit.</text>
</comment>
<comment type="interaction">
    <interactant intactId="EBI-25520884">
        <id>Q9LER7</id>
    </interactant>
    <interactant intactId="EBI-4424361">
        <id>Q9SZI2</id>
        <label>NAP1;1</label>
    </interactant>
    <organismsDiffer>false</organismsDiffer>
    <experiments>3</experiments>
</comment>
<comment type="subcellular location">
    <subcellularLocation>
        <location>Plastid</location>
        <location>Chloroplast</location>
    </subcellularLocation>
</comment>
<comment type="similarity">
    <text evidence="4">Belongs to the chloroplast-specific ribosomal protein cL37 family.</text>
</comment>
<proteinExistence type="evidence at protein level"/>
<gene>
    <name type="primary">PSRP5</name>
    <name type="ordered locus">At3g56910</name>
    <name type="ORF">T8M16_240</name>
</gene>
<keyword id="KW-0007">Acetylation</keyword>
<keyword id="KW-0150">Chloroplast</keyword>
<keyword id="KW-0934">Plastid</keyword>
<keyword id="KW-1185">Reference proteome</keyword>
<keyword id="KW-0687">Ribonucleoprotein</keyword>
<keyword id="KW-0689">Ribosomal protein</keyword>
<keyword id="KW-0809">Transit peptide</keyword>
<organism>
    <name type="scientific">Arabidopsis thaliana</name>
    <name type="common">Mouse-ear cress</name>
    <dbReference type="NCBI Taxonomy" id="3702"/>
    <lineage>
        <taxon>Eukaryota</taxon>
        <taxon>Viridiplantae</taxon>
        <taxon>Streptophyta</taxon>
        <taxon>Embryophyta</taxon>
        <taxon>Tracheophyta</taxon>
        <taxon>Spermatophyta</taxon>
        <taxon>Magnoliopsida</taxon>
        <taxon>eudicotyledons</taxon>
        <taxon>Gunneridae</taxon>
        <taxon>Pentapetalae</taxon>
        <taxon>rosids</taxon>
        <taxon>malvids</taxon>
        <taxon>Brassicales</taxon>
        <taxon>Brassicaceae</taxon>
        <taxon>Camelineae</taxon>
        <taxon>Arabidopsis</taxon>
    </lineage>
</organism>
<sequence length="148" mass="16361">MALLCFNSLPSLSSLSSSSSSRLLQSPSFASPVLSLKPNAVESKNRVSLSAYSLNSSHGRIVVKAAASGVDGAEPESKEEPKTVVAAVPVDKLPLESKEAKEKLLLELRLKMKLAKKIRLRRKRLVRKRKMRKKGRWPPSKMKKNKNV</sequence>
<evidence type="ECO:0000250" key="1"/>
<evidence type="ECO:0000256" key="2">
    <source>
        <dbReference type="SAM" id="MobiDB-lite"/>
    </source>
</evidence>
<evidence type="ECO:0000303" key="3">
    <source>
    </source>
</evidence>
<evidence type="ECO:0000305" key="4"/>
<evidence type="ECO:0007744" key="5">
    <source>
    </source>
</evidence>